<dbReference type="EC" id="2.5.1.43"/>
<dbReference type="EMBL" id="AF136942">
    <property type="protein sequence ID" value="AAD32651.1"/>
    <property type="molecule type" value="mRNA"/>
</dbReference>
<dbReference type="SMR" id="Q9XFB7"/>
<dbReference type="BRENDA" id="2.5.1.43">
    <property type="organism ID" value="2687"/>
</dbReference>
<dbReference type="ExpressionAtlas" id="Q9XFB7">
    <property type="expression patterns" value="baseline and differential"/>
</dbReference>
<dbReference type="GO" id="GO:0030410">
    <property type="term" value="F:nicotianamine synthase activity"/>
    <property type="evidence" value="ECO:0007669"/>
    <property type="project" value="UniProtKB-EC"/>
</dbReference>
<dbReference type="GO" id="GO:0030418">
    <property type="term" value="P:nicotianamine biosynthetic process"/>
    <property type="evidence" value="ECO:0007669"/>
    <property type="project" value="InterPro"/>
</dbReference>
<dbReference type="Gene3D" id="3.40.50.150">
    <property type="entry name" value="Vaccinia Virus protein VP39"/>
    <property type="match status" value="1"/>
</dbReference>
<dbReference type="InterPro" id="IPR004298">
    <property type="entry name" value="Nicotian_synth"/>
</dbReference>
<dbReference type="InterPro" id="IPR029063">
    <property type="entry name" value="SAM-dependent_MTases_sf"/>
</dbReference>
<dbReference type="PANTHER" id="PTHR32266">
    <property type="entry name" value="NICOTIANAMINE SYNTHASE 3"/>
    <property type="match status" value="1"/>
</dbReference>
<dbReference type="PANTHER" id="PTHR32266:SF12">
    <property type="entry name" value="NICOTIANAMINE SYNTHASE 3"/>
    <property type="match status" value="1"/>
</dbReference>
<dbReference type="Pfam" id="PF03059">
    <property type="entry name" value="NAS"/>
    <property type="match status" value="1"/>
</dbReference>
<dbReference type="SUPFAM" id="SSF53335">
    <property type="entry name" value="S-adenosyl-L-methionine-dependent methyltransferases"/>
    <property type="match status" value="1"/>
</dbReference>
<dbReference type="PROSITE" id="PS51142">
    <property type="entry name" value="NAS"/>
    <property type="match status" value="1"/>
</dbReference>
<evidence type="ECO:0000305" key="1"/>
<keyword id="KW-0903">Direct protein sequencing</keyword>
<keyword id="KW-0949">S-adenosyl-L-methionine</keyword>
<keyword id="KW-0808">Transferase</keyword>
<reference key="1">
    <citation type="journal article" date="1999" name="Eur. J. Biochem.">
        <title>Isolation, characterization and cDNA cloning of nicotianamine synthase from barley. A key enzyme for iron homeostasis in plants.</title>
        <authorList>
            <person name="Herbik A."/>
            <person name="Koch G."/>
            <person name="Mock H.-P."/>
            <person name="Dushkov D."/>
            <person name="Czihal A."/>
            <person name="Thielmann J."/>
            <person name="Stephan U.W."/>
            <person name="Baeumlein H."/>
        </authorList>
    </citation>
    <scope>NUCLEOTIDE SEQUENCE [MRNA]</scope>
    <scope>PROTEIN SEQUENCE OF 247-258</scope>
    <source>
        <strain>cv. Bonus</strain>
    </source>
</reference>
<protein>
    <recommendedName>
        <fullName>Nicotianamine synthase 9</fullName>
        <ecNumber>2.5.1.43</ecNumber>
    </recommendedName>
    <alternativeName>
        <fullName>S-adenosyl-L-methionine:S-adenosyl-L-methionine:S-adenosyl-methionine 3-amino-3-carboxypropyltransferase 9</fullName>
    </alternativeName>
</protein>
<accession>Q9XFB7</accession>
<proteinExistence type="evidence at protein level"/>
<gene>
    <name type="primary">NAS9</name>
    <name type="synonym">NASHOR2</name>
</gene>
<name>NAS9_HORVU</name>
<organism>
    <name type="scientific">Hordeum vulgare</name>
    <name type="common">Barley</name>
    <dbReference type="NCBI Taxonomy" id="4513"/>
    <lineage>
        <taxon>Eukaryota</taxon>
        <taxon>Viridiplantae</taxon>
        <taxon>Streptophyta</taxon>
        <taxon>Embryophyta</taxon>
        <taxon>Tracheophyta</taxon>
        <taxon>Spermatophyta</taxon>
        <taxon>Magnoliopsida</taxon>
        <taxon>Liliopsida</taxon>
        <taxon>Poales</taxon>
        <taxon>Poaceae</taxon>
        <taxon>BOP clade</taxon>
        <taxon>Pooideae</taxon>
        <taxon>Triticodae</taxon>
        <taxon>Triticeae</taxon>
        <taxon>Hordeinae</taxon>
        <taxon>Hordeum</taxon>
    </lineage>
</organism>
<comment type="function">
    <text>Synthesizes nicotianamine, a polyamine that is the first intermediate in the synthesis of the phytosiderophores of the mugineic acid type found in gramineae which serves as a sensor for the physiological iron status within the plant, and/or might be involved in the transport of iron.</text>
</comment>
<comment type="catalytic activity">
    <reaction>
        <text>3 S-adenosyl-L-methionine = nicotianamine + 3 S-methyl-5'-thioadenosine + 3 H(+)</text>
        <dbReference type="Rhea" id="RHEA:16481"/>
        <dbReference type="ChEBI" id="CHEBI:15378"/>
        <dbReference type="ChEBI" id="CHEBI:17509"/>
        <dbReference type="ChEBI" id="CHEBI:58249"/>
        <dbReference type="ChEBI" id="CHEBI:59789"/>
        <dbReference type="EC" id="2.5.1.43"/>
    </reaction>
</comment>
<comment type="subunit">
    <text>Homotrimer.</text>
</comment>
<comment type="induction">
    <text>Fivefold increase after iron deficiency.</text>
</comment>
<comment type="similarity">
    <text evidence="1">Belongs to the nicotianamine synthase (NAS)-like family.</text>
</comment>
<sequence>MGMEGCCSNKKVMEEEALVKKITGLAAAIGELPSLSPSPEVNALFTELVTSCIPPSTVDVDALGPDAQEMRARLIRLCADAEGHLEAHYSDLLAAHDNPLDHLTLFPYFNNYIKLSQLEHGLLARHVPGPAPARVAFLGSGPLPLSSLVLAARHLPDASFDNYDISGEANERASRLVRADADAGARMAFRTADVADVTTELEGYDVVFLAALVGMAAEEKARLVEHLGRHMAPGAALVVRSAHGARGFLYPVVDPEEIRRGGFEVLTVHHPEDEVINSVIIARKAAAPPPVAADRDVPVNMPMPAQCAVAVSRPCLGCACELGARAHQKMKEIAMEEMEA</sequence>
<feature type="chain" id="PRO_0000212712" description="Nicotianamine synthase 9">
    <location>
        <begin position="1"/>
        <end position="340"/>
    </location>
</feature>
<feature type="sequence conflict" description="In Ref. 1; AA sequence." evidence="1" ref="1">
    <original>G</original>
    <variation>S</variation>
    <location>
        <position position="247"/>
    </location>
</feature>
<feature type="sequence conflict" description="In Ref. 1; AA sequence." evidence="1" ref="1">
    <original>V</original>
    <variation>I</variation>
    <location>
        <position position="252"/>
    </location>
</feature>